<evidence type="ECO:0000255" key="1">
    <source>
        <dbReference type="HAMAP-Rule" id="MF_00278"/>
    </source>
</evidence>
<dbReference type="EC" id="4.3.2.10" evidence="1"/>
<dbReference type="EC" id="3.5.1.2" evidence="1"/>
<dbReference type="EMBL" id="CP000141">
    <property type="protein sequence ID" value="ABB14525.1"/>
    <property type="molecule type" value="Genomic_DNA"/>
</dbReference>
<dbReference type="RefSeq" id="WP_011344010.1">
    <property type="nucleotide sequence ID" value="NC_007503.1"/>
</dbReference>
<dbReference type="SMR" id="Q3AD50"/>
<dbReference type="FunCoup" id="Q3AD50">
    <property type="interactions" value="358"/>
</dbReference>
<dbReference type="STRING" id="246194.CHY_1088"/>
<dbReference type="KEGG" id="chy:CHY_1088"/>
<dbReference type="eggNOG" id="COG0118">
    <property type="taxonomic scope" value="Bacteria"/>
</dbReference>
<dbReference type="HOGENOM" id="CLU_071837_2_2_9"/>
<dbReference type="InParanoid" id="Q3AD50"/>
<dbReference type="OrthoDB" id="9807137at2"/>
<dbReference type="UniPathway" id="UPA00031">
    <property type="reaction ID" value="UER00010"/>
</dbReference>
<dbReference type="Proteomes" id="UP000002706">
    <property type="component" value="Chromosome"/>
</dbReference>
<dbReference type="GO" id="GO:0005737">
    <property type="term" value="C:cytoplasm"/>
    <property type="evidence" value="ECO:0007669"/>
    <property type="project" value="UniProtKB-SubCell"/>
</dbReference>
<dbReference type="GO" id="GO:0004359">
    <property type="term" value="F:glutaminase activity"/>
    <property type="evidence" value="ECO:0007669"/>
    <property type="project" value="UniProtKB-EC"/>
</dbReference>
<dbReference type="GO" id="GO:0000107">
    <property type="term" value="F:imidazoleglycerol-phosphate synthase activity"/>
    <property type="evidence" value="ECO:0007669"/>
    <property type="project" value="UniProtKB-UniRule"/>
</dbReference>
<dbReference type="GO" id="GO:0016829">
    <property type="term" value="F:lyase activity"/>
    <property type="evidence" value="ECO:0007669"/>
    <property type="project" value="UniProtKB-KW"/>
</dbReference>
<dbReference type="GO" id="GO:0000105">
    <property type="term" value="P:L-histidine biosynthetic process"/>
    <property type="evidence" value="ECO:0007669"/>
    <property type="project" value="UniProtKB-UniRule"/>
</dbReference>
<dbReference type="CDD" id="cd01748">
    <property type="entry name" value="GATase1_IGP_Synthase"/>
    <property type="match status" value="1"/>
</dbReference>
<dbReference type="Gene3D" id="3.40.50.880">
    <property type="match status" value="1"/>
</dbReference>
<dbReference type="HAMAP" id="MF_00278">
    <property type="entry name" value="HisH"/>
    <property type="match status" value="1"/>
</dbReference>
<dbReference type="InterPro" id="IPR029062">
    <property type="entry name" value="Class_I_gatase-like"/>
</dbReference>
<dbReference type="InterPro" id="IPR017926">
    <property type="entry name" value="GATASE"/>
</dbReference>
<dbReference type="InterPro" id="IPR010139">
    <property type="entry name" value="Imidazole-glycPsynth_HisH"/>
</dbReference>
<dbReference type="NCBIfam" id="TIGR01855">
    <property type="entry name" value="IMP_synth_hisH"/>
    <property type="match status" value="1"/>
</dbReference>
<dbReference type="PANTHER" id="PTHR42701">
    <property type="entry name" value="IMIDAZOLE GLYCEROL PHOSPHATE SYNTHASE SUBUNIT HISH"/>
    <property type="match status" value="1"/>
</dbReference>
<dbReference type="PANTHER" id="PTHR42701:SF1">
    <property type="entry name" value="IMIDAZOLE GLYCEROL PHOSPHATE SYNTHASE SUBUNIT HISH"/>
    <property type="match status" value="1"/>
</dbReference>
<dbReference type="Pfam" id="PF00117">
    <property type="entry name" value="GATase"/>
    <property type="match status" value="1"/>
</dbReference>
<dbReference type="PIRSF" id="PIRSF000495">
    <property type="entry name" value="Amidotransf_hisH"/>
    <property type="match status" value="1"/>
</dbReference>
<dbReference type="SUPFAM" id="SSF52317">
    <property type="entry name" value="Class I glutamine amidotransferase-like"/>
    <property type="match status" value="1"/>
</dbReference>
<dbReference type="PROSITE" id="PS51273">
    <property type="entry name" value="GATASE_TYPE_1"/>
    <property type="match status" value="1"/>
</dbReference>
<accession>Q3AD50</accession>
<protein>
    <recommendedName>
        <fullName evidence="1">Imidazole glycerol phosphate synthase subunit HisH</fullName>
        <ecNumber evidence="1">4.3.2.10</ecNumber>
    </recommendedName>
    <alternativeName>
        <fullName evidence="1">IGP synthase glutaminase subunit</fullName>
        <ecNumber evidence="1">3.5.1.2</ecNumber>
    </alternativeName>
    <alternativeName>
        <fullName evidence="1">IGP synthase subunit HisH</fullName>
    </alternativeName>
    <alternativeName>
        <fullName evidence="1">ImGP synthase subunit HisH</fullName>
        <shortName evidence="1">IGPS subunit HisH</shortName>
    </alternativeName>
</protein>
<feature type="chain" id="PRO_0000231715" description="Imidazole glycerol phosphate synthase subunit HisH">
    <location>
        <begin position="1"/>
        <end position="199"/>
    </location>
</feature>
<feature type="domain" description="Glutamine amidotransferase type-1" evidence="1">
    <location>
        <begin position="1"/>
        <end position="199"/>
    </location>
</feature>
<feature type="active site" description="Nucleophile" evidence="1">
    <location>
        <position position="79"/>
    </location>
</feature>
<feature type="active site" evidence="1">
    <location>
        <position position="180"/>
    </location>
</feature>
<feature type="active site" evidence="1">
    <location>
        <position position="182"/>
    </location>
</feature>
<keyword id="KW-0028">Amino-acid biosynthesis</keyword>
<keyword id="KW-0963">Cytoplasm</keyword>
<keyword id="KW-0315">Glutamine amidotransferase</keyword>
<keyword id="KW-0368">Histidine biosynthesis</keyword>
<keyword id="KW-0378">Hydrolase</keyword>
<keyword id="KW-0456">Lyase</keyword>
<keyword id="KW-1185">Reference proteome</keyword>
<organism>
    <name type="scientific">Carboxydothermus hydrogenoformans (strain ATCC BAA-161 / DSM 6008 / Z-2901)</name>
    <dbReference type="NCBI Taxonomy" id="246194"/>
    <lineage>
        <taxon>Bacteria</taxon>
        <taxon>Bacillati</taxon>
        <taxon>Bacillota</taxon>
        <taxon>Clostridia</taxon>
        <taxon>Thermoanaerobacterales</taxon>
        <taxon>Thermoanaerobacteraceae</taxon>
        <taxon>Carboxydothermus</taxon>
    </lineage>
</organism>
<name>HIS5_CARHZ</name>
<reference key="1">
    <citation type="journal article" date="2005" name="PLoS Genet.">
        <title>Life in hot carbon monoxide: the complete genome sequence of Carboxydothermus hydrogenoformans Z-2901.</title>
        <authorList>
            <person name="Wu M."/>
            <person name="Ren Q."/>
            <person name="Durkin A.S."/>
            <person name="Daugherty S.C."/>
            <person name="Brinkac L.M."/>
            <person name="Dodson R.J."/>
            <person name="Madupu R."/>
            <person name="Sullivan S.A."/>
            <person name="Kolonay J.F."/>
            <person name="Nelson W.C."/>
            <person name="Tallon L.J."/>
            <person name="Jones K.M."/>
            <person name="Ulrich L.E."/>
            <person name="Gonzalez J.M."/>
            <person name="Zhulin I.B."/>
            <person name="Robb F.T."/>
            <person name="Eisen J.A."/>
        </authorList>
    </citation>
    <scope>NUCLEOTIDE SEQUENCE [LARGE SCALE GENOMIC DNA]</scope>
    <source>
        <strain>ATCC BAA-161 / DSM 6008 / Z-2901</strain>
    </source>
</reference>
<gene>
    <name evidence="1" type="primary">hisH</name>
    <name type="ordered locus">CHY_1088</name>
</gene>
<sequence length="199" mass="22654">MTVVVDYEMGNLLSVTKALEELGYKPSVTSDPRKILEEDLVVLPGVGAFRDAVRNLKEKGLFLALKERASLNRPILGICLGMQLFFTKSYEDGEYEGLDLIPGEVVRFQKAPKIPHMGWNNLVPVDTTHELFKNLPDYYVYFVHSYYAQTDSRYVLAYTEYGEKFPAAVRRGSIIGFQFHPEKSGPVGRQILKNLREML</sequence>
<proteinExistence type="inferred from homology"/>
<comment type="function">
    <text evidence="1">IGPS catalyzes the conversion of PRFAR and glutamine to IGP, AICAR and glutamate. The HisH subunit catalyzes the hydrolysis of glutamine to glutamate and ammonia as part of the synthesis of IGP and AICAR. The resulting ammonia molecule is channeled to the active site of HisF.</text>
</comment>
<comment type="catalytic activity">
    <reaction evidence="1">
        <text>5-[(5-phospho-1-deoxy-D-ribulos-1-ylimino)methylamino]-1-(5-phospho-beta-D-ribosyl)imidazole-4-carboxamide + L-glutamine = D-erythro-1-(imidazol-4-yl)glycerol 3-phosphate + 5-amino-1-(5-phospho-beta-D-ribosyl)imidazole-4-carboxamide + L-glutamate + H(+)</text>
        <dbReference type="Rhea" id="RHEA:24793"/>
        <dbReference type="ChEBI" id="CHEBI:15378"/>
        <dbReference type="ChEBI" id="CHEBI:29985"/>
        <dbReference type="ChEBI" id="CHEBI:58278"/>
        <dbReference type="ChEBI" id="CHEBI:58359"/>
        <dbReference type="ChEBI" id="CHEBI:58475"/>
        <dbReference type="ChEBI" id="CHEBI:58525"/>
        <dbReference type="EC" id="4.3.2.10"/>
    </reaction>
</comment>
<comment type="catalytic activity">
    <reaction evidence="1">
        <text>L-glutamine + H2O = L-glutamate + NH4(+)</text>
        <dbReference type="Rhea" id="RHEA:15889"/>
        <dbReference type="ChEBI" id="CHEBI:15377"/>
        <dbReference type="ChEBI" id="CHEBI:28938"/>
        <dbReference type="ChEBI" id="CHEBI:29985"/>
        <dbReference type="ChEBI" id="CHEBI:58359"/>
        <dbReference type="EC" id="3.5.1.2"/>
    </reaction>
</comment>
<comment type="pathway">
    <text evidence="1">Amino-acid biosynthesis; L-histidine biosynthesis; L-histidine from 5-phospho-alpha-D-ribose 1-diphosphate: step 5/9.</text>
</comment>
<comment type="subunit">
    <text evidence="1">Heterodimer of HisH and HisF.</text>
</comment>
<comment type="subcellular location">
    <subcellularLocation>
        <location evidence="1">Cytoplasm</location>
    </subcellularLocation>
</comment>